<sequence length="2285" mass="268328">MKGHQFKSWIFELREILREIKNSHYFLDSWTQFNSVGSFIHIFFHQERFIKLLDSRIWSILFSRNSQGSTSNRYFTIKGVVLFVVVVLIYRINNRKMVERKNLYLTGLLPIPMNSIGPRNDTLEESFGSSNINRLIVSLLYLPKGKKISESRFLDPKESTWVLPITKKCIMSESNWGSRWWRNWIGKKRDSSCKISNETVAGIEISFKEKDIKYLEFLFVYYMDDPIRKDHDWELFDRLSPRKGRNIINLNSGQLFEILVKDWICYLMFAFREKIPIEVEGFFKQQGAGSTIQSNDIEHVSHLFSRKKWAISLQNCAQFHMWQFRQDLFVSWGNNPHESDFLRNISRENWIWLDNVWLVNKDRFFSKARNISSNIQYDSTRSSFVQGRDSSQLKGSSDQSRDHFDSISNEDSEYHTLINQREIQQLKERSILWDPSFLQTERTEIESDRFPKCLSGYSSMSRLFTEGAKEMNNHLLPEEIEEFLGNPTRSIRSFFSDRWSELHLGSNPTERSTRDQKLLKKEQDVSFVPSRRSENKEIVNIFKTITYLQNTVSIHPISSDPGCDMVLKDELDMDSSNKISFLNKNPFFDLFHLFHDRNGGGYTLHHDFESEERFQEMADLFTLSITEPDLVYHKGFAFFIDSYGLDQKQFLNEVFNSRDESKKKSLLVLPPIFYEENESFYRRIRKKWVRISCGNDLEDPKQKRVVFASNNIMEAVNQYGLIRNLIQIQYSTYGYIRNVLNQFFLMNRSDRNFEYGIQKDQIGNDTLNHRTLMKYTINQHLSNLKQSQKKWFDPLIFLSRTERSMNWDPNSYRYKWSNGSNNFQEHLEHFISEQKSRFLFQVVFDRLRINQYSIDWSEVIDKKDLSKSLPFFLSKLLLFLSKFLLFLSNSLPFFFVSFGNIPIHRSEIHIYELKGPNDQLCNQLLEPIGLQIVHLKKWKPFLLDDHDTSQKSKFLINGGTISPFLFNKIPKWMIDSFHTRNNRRKSFDNTDSSFSMISHDQDNWLNPVKPFHRSSLISSFYKANRLRFLNNLHHFCFYCNKRFPFYVEKARIKNYDFTYGQFLNILFIRNKIFSLCGGKKKHAFLERDTISPIESQVSNIFIPNDFPQSGDESLYKSFHFPIRPDPFVRRAIYSIADVSGTPLTEGQIFNFERTYCQPLSDINLSDSEGKNLHQYLNFNSNMGLIHTPCSEKYLPSEKRKKRSLCLKKCVEKGQMYRTFQRDSAFSTLSKWNLFQTYMPWFLTSTGYKYLNLIFLDTFSDHLLPILSSSQKIVSIFHDIMHGSDISWRILQKNLWKTQWNLISEISSKCLHNLLLSEEMIHRNNEPPLISTRLRSPNVREFLYSILFLLLVAGYLVRTHLLFVSRAYSELQTEFEKVKSLMIPSYMIELRKLLDRYPTSELNSFWLKNLFLVALEQLGDLLEEIRGSASGGNMLWGGGPAYGVKSIRSKKKFFNINLIDLISIIPNPINRITFSRNTRHLSHTSKEIYSLIRKRKNVNGDWIDDKIESLVANSDSIDDKEREFLVQFSTLTTEKRIDQILLSLTHSDHLSKNDSGYQMIEEPGAIYLRYLVDIHKKYLMNYEFNTPCLAERRIFLAHYQTITYSQTSCGANSFHFPSHGKPFSLRLALSPSRGILVIGSIGTGRSYLVKYLATNSYVPFITVFLNKFLDNKPKGFLIDDRDDIDDSDDIDVSDDIDRDLDTELELLTRMNVLTMDMMPEIDRFYITLQFELAKAMSPCIIWIPNIHDLDVNESNYLSLGLLVNYLSRDCERCSTRNILVIASTHIPQKVDPALIAPNKLNTCIKIRRLLIPQQRKHVFTLSYSRGFHLEKKMFHTKRFGSVTMGSNVRDLVALTNEALSISITQKKSIIDTNIIRSALHRQTWDLRSQVRSVQDHGILFYQIGRAVAQNVFLSNCPIDPISIYMKKKSCNEGDSYLYKWYFELGTSMKKLTILLYLLSCSAGSIAQDLWSLPGPDEKNGITYYGLVENDSDLVHGLLEVEGALVGSSRTEKDCSQFDNDRVTLLLRPEPRSPLDMMQNGSCSILDQRFLYEKYESEFEEGEVEGILDPQQIEEDLFNHIVWAPRIWSPWGFLFDCIERPNSLGFPYWARSFRGKRIIYDEEDELQENDSEFLQSGTMQYQIRDRSSKEQGVFRISQFIWDPADPLFFLFKDQPLVSVFSHREFFADEEMSKGLLTSQTDPPTSIYKRWFIKNTQEKHFELLIHRQRWLRTKSSLSNGFFRSNTLSESYQYLSNLFLSNGRLLDQMTKALLRKRWLFPDEMKIGFM</sequence>
<reference key="1">
    <citation type="journal article" date="2006" name="Science">
        <title>The genome of black cottonwood, Populus trichocarpa (Torr. &amp; Gray).</title>
        <authorList>
            <person name="Tuskan G.A."/>
            <person name="Difazio S."/>
            <person name="Jansson S."/>
            <person name="Bohlmann J."/>
            <person name="Grigoriev I."/>
            <person name="Hellsten U."/>
            <person name="Putnam N."/>
            <person name="Ralph S."/>
            <person name="Rombauts S."/>
            <person name="Salamov A."/>
            <person name="Schein J."/>
            <person name="Sterck L."/>
            <person name="Aerts A."/>
            <person name="Bhalerao R.R."/>
            <person name="Bhalerao R.P."/>
            <person name="Blaudez D."/>
            <person name="Boerjan W."/>
            <person name="Brun A."/>
            <person name="Brunner A."/>
            <person name="Busov V."/>
            <person name="Campbell M."/>
            <person name="Carlson J."/>
            <person name="Chalot M."/>
            <person name="Chapman J."/>
            <person name="Chen G.-L."/>
            <person name="Cooper D."/>
            <person name="Coutinho P.M."/>
            <person name="Couturier J."/>
            <person name="Covert S."/>
            <person name="Cronk Q."/>
            <person name="Cunningham R."/>
            <person name="Davis J."/>
            <person name="Degroeve S."/>
            <person name="Dejardin A."/>
            <person name="dePamphilis C.W."/>
            <person name="Detter J."/>
            <person name="Dirks B."/>
            <person name="Dubchak I."/>
            <person name="Duplessis S."/>
            <person name="Ehlting J."/>
            <person name="Ellis B."/>
            <person name="Gendler K."/>
            <person name="Goodstein D."/>
            <person name="Gribskov M."/>
            <person name="Grimwood J."/>
            <person name="Groover A."/>
            <person name="Gunter L."/>
            <person name="Hamberger B."/>
            <person name="Heinze B."/>
            <person name="Helariutta Y."/>
            <person name="Henrissat B."/>
            <person name="Holligan D."/>
            <person name="Holt R."/>
            <person name="Huang W."/>
            <person name="Islam-Faridi N."/>
            <person name="Jones S."/>
            <person name="Jones-Rhoades M."/>
            <person name="Jorgensen R."/>
            <person name="Joshi C."/>
            <person name="Kangasjaervi J."/>
            <person name="Karlsson J."/>
            <person name="Kelleher C."/>
            <person name="Kirkpatrick R."/>
            <person name="Kirst M."/>
            <person name="Kohler A."/>
            <person name="Kalluri U."/>
            <person name="Larimer F."/>
            <person name="Leebens-Mack J."/>
            <person name="Leple J.-C."/>
            <person name="Locascio P."/>
            <person name="Lou Y."/>
            <person name="Lucas S."/>
            <person name="Martin F."/>
            <person name="Montanini B."/>
            <person name="Napoli C."/>
            <person name="Nelson D.R."/>
            <person name="Nelson C."/>
            <person name="Nieminen K."/>
            <person name="Nilsson O."/>
            <person name="Pereda V."/>
            <person name="Peter G."/>
            <person name="Philippe R."/>
            <person name="Pilate G."/>
            <person name="Poliakov A."/>
            <person name="Razumovskaya J."/>
            <person name="Richardson P."/>
            <person name="Rinaldi C."/>
            <person name="Ritland K."/>
            <person name="Rouze P."/>
            <person name="Ryaboy D."/>
            <person name="Schmutz J."/>
            <person name="Schrader J."/>
            <person name="Segerman B."/>
            <person name="Shin H."/>
            <person name="Siddiqui A."/>
            <person name="Sterky F."/>
            <person name="Terry A."/>
            <person name="Tsai C.-J."/>
            <person name="Uberbacher E."/>
            <person name="Unneberg P."/>
            <person name="Vahala J."/>
            <person name="Wall K."/>
            <person name="Wessler S."/>
            <person name="Yang G."/>
            <person name="Yin T."/>
            <person name="Douglas C."/>
            <person name="Marra M."/>
            <person name="Sandberg G."/>
            <person name="Van de Peer Y."/>
            <person name="Rokhsar D.S."/>
        </authorList>
    </citation>
    <scope>NUCLEOTIDE SEQUENCE [LARGE SCALE GENOMIC DNA]</scope>
    <source>
        <strain>cv. Nisqually</strain>
    </source>
</reference>
<gene>
    <name evidence="1" type="primary">ycf2-1</name>
    <name type="ordered locus">Poptr_cp066</name>
</gene>
<gene>
    <name evidence="1" type="primary">ycf2-2</name>
    <name type="ordered locus">Poptr_cp098</name>
</gene>
<feature type="chain" id="PRO_0000343790" description="Protein Ycf2">
    <location>
        <begin position="1"/>
        <end position="2285"/>
    </location>
</feature>
<feature type="binding site" evidence="1">
    <location>
        <begin position="1638"/>
        <end position="1645"/>
    </location>
    <ligand>
        <name>ATP</name>
        <dbReference type="ChEBI" id="CHEBI:30616"/>
    </ligand>
</feature>
<comment type="function">
    <text evidence="1">Probable ATPase of unknown function. Its presence in a non-photosynthetic plant (Epifagus virginiana) and experiments in tobacco indicate that it has an essential function which is probably not related to photosynthesis.</text>
</comment>
<comment type="subcellular location">
    <subcellularLocation>
        <location evidence="1">Plastid</location>
        <location evidence="1">Chloroplast stroma</location>
    </subcellularLocation>
</comment>
<comment type="similarity">
    <text evidence="1">Belongs to the Ycf2 family.</text>
</comment>
<accession>A4GYV4</accession>
<protein>
    <recommendedName>
        <fullName evidence="1">Protein Ycf2</fullName>
    </recommendedName>
</protein>
<proteinExistence type="inferred from homology"/>
<organism>
    <name type="scientific">Populus trichocarpa</name>
    <name type="common">Western balsam poplar</name>
    <name type="synonym">Populus balsamifera subsp. trichocarpa</name>
    <dbReference type="NCBI Taxonomy" id="3694"/>
    <lineage>
        <taxon>Eukaryota</taxon>
        <taxon>Viridiplantae</taxon>
        <taxon>Streptophyta</taxon>
        <taxon>Embryophyta</taxon>
        <taxon>Tracheophyta</taxon>
        <taxon>Spermatophyta</taxon>
        <taxon>Magnoliopsida</taxon>
        <taxon>eudicotyledons</taxon>
        <taxon>Gunneridae</taxon>
        <taxon>Pentapetalae</taxon>
        <taxon>rosids</taxon>
        <taxon>fabids</taxon>
        <taxon>Malpighiales</taxon>
        <taxon>Salicaceae</taxon>
        <taxon>Saliceae</taxon>
        <taxon>Populus</taxon>
    </lineage>
</organism>
<geneLocation type="chloroplast"/>
<dbReference type="EMBL" id="EF489041">
    <property type="protein sequence ID" value="ABO36749.1"/>
    <property type="molecule type" value="Genomic_DNA"/>
</dbReference>
<dbReference type="EMBL" id="EF489041">
    <property type="protein sequence ID" value="ABO36779.1"/>
    <property type="molecule type" value="Genomic_DNA"/>
</dbReference>
<dbReference type="FunCoup" id="A4GYV4">
    <property type="interactions" value="17"/>
</dbReference>
<dbReference type="STRING" id="3694.A4GYV4"/>
<dbReference type="EnsemblPlants" id="Potri.013G143400.2.v4.1">
    <property type="protein sequence ID" value="Potri.013G143400.2.v4.1"/>
    <property type="gene ID" value="Potri.013G143400.v4.1"/>
</dbReference>
<dbReference type="Gramene" id="Potri.013G143400.2.v4.1">
    <property type="protein sequence ID" value="Potri.013G143400.2.v4.1"/>
    <property type="gene ID" value="Potri.013G143400.v4.1"/>
</dbReference>
<dbReference type="KEGG" id="pop:4929717"/>
<dbReference type="KEGG" id="pop:4929768"/>
<dbReference type="eggNOG" id="ENOG502SDKG">
    <property type="taxonomic scope" value="Eukaryota"/>
</dbReference>
<dbReference type="InParanoid" id="A4GYV4"/>
<dbReference type="OMA" id="IMSESNW"/>
<dbReference type="OrthoDB" id="1593072at2759"/>
<dbReference type="Proteomes" id="UP000006729">
    <property type="component" value="Chloroplast"/>
</dbReference>
<dbReference type="GO" id="GO:0009570">
    <property type="term" value="C:chloroplast stroma"/>
    <property type="evidence" value="ECO:0007669"/>
    <property type="project" value="UniProtKB-SubCell"/>
</dbReference>
<dbReference type="GO" id="GO:0005524">
    <property type="term" value="F:ATP binding"/>
    <property type="evidence" value="ECO:0007669"/>
    <property type="project" value="UniProtKB-KW"/>
</dbReference>
<dbReference type="GO" id="GO:0016887">
    <property type="term" value="F:ATP hydrolysis activity"/>
    <property type="evidence" value="ECO:0007669"/>
    <property type="project" value="InterPro"/>
</dbReference>
<dbReference type="CDD" id="cd19505">
    <property type="entry name" value="RecA-like_Ycf2"/>
    <property type="match status" value="1"/>
</dbReference>
<dbReference type="Gene3D" id="3.40.50.300">
    <property type="entry name" value="P-loop containing nucleotide triphosphate hydrolases"/>
    <property type="match status" value="1"/>
</dbReference>
<dbReference type="HAMAP" id="MF_01330">
    <property type="entry name" value="Ycf2"/>
    <property type="match status" value="1"/>
</dbReference>
<dbReference type="InterPro" id="IPR003593">
    <property type="entry name" value="AAA+_ATPase"/>
</dbReference>
<dbReference type="InterPro" id="IPR003959">
    <property type="entry name" value="ATPase_AAA_core"/>
</dbReference>
<dbReference type="InterPro" id="IPR027417">
    <property type="entry name" value="P-loop_NTPase"/>
</dbReference>
<dbReference type="InterPro" id="IPR008543">
    <property type="entry name" value="Uncharacterised_Ycf2"/>
</dbReference>
<dbReference type="InterPro" id="IPR056777">
    <property type="entry name" value="Ycf2_N"/>
</dbReference>
<dbReference type="PANTHER" id="PTHR33078:SF92">
    <property type="entry name" value="PROTEIN YCF2"/>
    <property type="match status" value="1"/>
</dbReference>
<dbReference type="PANTHER" id="PTHR33078">
    <property type="entry name" value="PROTEIN YCF2-RELATED"/>
    <property type="match status" value="1"/>
</dbReference>
<dbReference type="Pfam" id="PF00004">
    <property type="entry name" value="AAA"/>
    <property type="match status" value="1"/>
</dbReference>
<dbReference type="Pfam" id="PF05695">
    <property type="entry name" value="Ycf2"/>
    <property type="match status" value="1"/>
</dbReference>
<dbReference type="SMART" id="SM00382">
    <property type="entry name" value="AAA"/>
    <property type="match status" value="1"/>
</dbReference>
<dbReference type="SUPFAM" id="SSF52540">
    <property type="entry name" value="P-loop containing nucleoside triphosphate hydrolases"/>
    <property type="match status" value="1"/>
</dbReference>
<name>YCF2_POPTR</name>
<evidence type="ECO:0000255" key="1">
    <source>
        <dbReference type="HAMAP-Rule" id="MF_01330"/>
    </source>
</evidence>
<keyword id="KW-0067">ATP-binding</keyword>
<keyword id="KW-0150">Chloroplast</keyword>
<keyword id="KW-0547">Nucleotide-binding</keyword>
<keyword id="KW-0934">Plastid</keyword>
<keyword id="KW-1185">Reference proteome</keyword>